<sequence length="77" mass="8563">MNVFGIGLPELIVILVVALLIFGPKKLPEIGRSLGKTKRAFEEASREFQDEIKRQTAALEEEQQAKAEAESPREISP</sequence>
<organism>
    <name type="scientific">Thermosynechococcus vestitus (strain NIES-2133 / IAM M-273 / BP-1)</name>
    <dbReference type="NCBI Taxonomy" id="197221"/>
    <lineage>
        <taxon>Bacteria</taxon>
        <taxon>Bacillati</taxon>
        <taxon>Cyanobacteriota</taxon>
        <taxon>Cyanophyceae</taxon>
        <taxon>Acaryochloridales</taxon>
        <taxon>Thermosynechococcaceae</taxon>
        <taxon>Thermosynechococcus</taxon>
    </lineage>
</organism>
<dbReference type="EMBL" id="BA000039">
    <property type="protein sequence ID" value="BAC08937.1"/>
    <property type="molecule type" value="Genomic_DNA"/>
</dbReference>
<dbReference type="RefSeq" id="NP_682175.1">
    <property type="nucleotide sequence ID" value="NC_004113.1"/>
</dbReference>
<dbReference type="RefSeq" id="WP_011057225.1">
    <property type="nucleotide sequence ID" value="NC_004113.1"/>
</dbReference>
<dbReference type="SMR" id="Q8DJ44"/>
<dbReference type="STRING" id="197221.gene:10747983"/>
<dbReference type="EnsemblBacteria" id="BAC08937">
    <property type="protein sequence ID" value="BAC08937"/>
    <property type="gene ID" value="BAC08937"/>
</dbReference>
<dbReference type="KEGG" id="tel:tsl1385"/>
<dbReference type="PATRIC" id="fig|197221.4.peg.1457"/>
<dbReference type="eggNOG" id="COG1826">
    <property type="taxonomic scope" value="Bacteria"/>
</dbReference>
<dbReference type="Proteomes" id="UP000000440">
    <property type="component" value="Chromosome"/>
</dbReference>
<dbReference type="GO" id="GO:0033281">
    <property type="term" value="C:TAT protein transport complex"/>
    <property type="evidence" value="ECO:0007669"/>
    <property type="project" value="UniProtKB-UniRule"/>
</dbReference>
<dbReference type="GO" id="GO:0008320">
    <property type="term" value="F:protein transmembrane transporter activity"/>
    <property type="evidence" value="ECO:0007669"/>
    <property type="project" value="UniProtKB-UniRule"/>
</dbReference>
<dbReference type="GO" id="GO:0043953">
    <property type="term" value="P:protein transport by the Tat complex"/>
    <property type="evidence" value="ECO:0007669"/>
    <property type="project" value="UniProtKB-UniRule"/>
</dbReference>
<dbReference type="Gene3D" id="1.20.5.3310">
    <property type="match status" value="1"/>
</dbReference>
<dbReference type="HAMAP" id="MF_00236">
    <property type="entry name" value="TatA_E"/>
    <property type="match status" value="1"/>
</dbReference>
<dbReference type="InterPro" id="IPR003369">
    <property type="entry name" value="TatA/B/E"/>
</dbReference>
<dbReference type="InterPro" id="IPR006312">
    <property type="entry name" value="TatA/E"/>
</dbReference>
<dbReference type="NCBIfam" id="NF011429">
    <property type="entry name" value="PRK14857.1"/>
    <property type="match status" value="1"/>
</dbReference>
<dbReference type="NCBIfam" id="NF011430">
    <property type="entry name" value="PRK14861.1"/>
    <property type="match status" value="1"/>
</dbReference>
<dbReference type="NCBIfam" id="TIGR01411">
    <property type="entry name" value="tatAE"/>
    <property type="match status" value="1"/>
</dbReference>
<dbReference type="PANTHER" id="PTHR33162">
    <property type="entry name" value="SEC-INDEPENDENT PROTEIN TRANSLOCASE PROTEIN TATA, CHLOROPLASTIC"/>
    <property type="match status" value="1"/>
</dbReference>
<dbReference type="PANTHER" id="PTHR33162:SF1">
    <property type="entry name" value="SEC-INDEPENDENT PROTEIN TRANSLOCASE PROTEIN TATA, CHLOROPLASTIC"/>
    <property type="match status" value="1"/>
</dbReference>
<dbReference type="Pfam" id="PF02416">
    <property type="entry name" value="TatA_B_E"/>
    <property type="match status" value="1"/>
</dbReference>
<dbReference type="PRINTS" id="PR01506">
    <property type="entry name" value="TATBPROTEIN"/>
</dbReference>
<protein>
    <recommendedName>
        <fullName evidence="1">Sec-independent protein translocase protein TatA</fullName>
    </recommendedName>
</protein>
<gene>
    <name evidence="1" type="primary">tatA</name>
    <name type="ordered locus">tsl1385</name>
</gene>
<name>TATA_THEVB</name>
<reference key="1">
    <citation type="journal article" date="2002" name="DNA Res.">
        <title>Complete genome structure of the thermophilic cyanobacterium Thermosynechococcus elongatus BP-1.</title>
        <authorList>
            <person name="Nakamura Y."/>
            <person name="Kaneko T."/>
            <person name="Sato S."/>
            <person name="Ikeuchi M."/>
            <person name="Katoh H."/>
            <person name="Sasamoto S."/>
            <person name="Watanabe A."/>
            <person name="Iriguchi M."/>
            <person name="Kawashima K."/>
            <person name="Kimura T."/>
            <person name="Kishida Y."/>
            <person name="Kiyokawa C."/>
            <person name="Kohara M."/>
            <person name="Matsumoto M."/>
            <person name="Matsuno A."/>
            <person name="Nakazaki N."/>
            <person name="Shimpo S."/>
            <person name="Sugimoto M."/>
            <person name="Takeuchi C."/>
            <person name="Yamada M."/>
            <person name="Tabata S."/>
        </authorList>
    </citation>
    <scope>NUCLEOTIDE SEQUENCE [LARGE SCALE GENOMIC DNA]</scope>
    <source>
        <strain>NIES-2133 / IAM M-273 / BP-1</strain>
    </source>
</reference>
<keyword id="KW-0997">Cell inner membrane</keyword>
<keyword id="KW-1003">Cell membrane</keyword>
<keyword id="KW-0472">Membrane</keyword>
<keyword id="KW-0653">Protein transport</keyword>
<keyword id="KW-1185">Reference proteome</keyword>
<keyword id="KW-0811">Translocation</keyword>
<keyword id="KW-0812">Transmembrane</keyword>
<keyword id="KW-1133">Transmembrane helix</keyword>
<keyword id="KW-0813">Transport</keyword>
<evidence type="ECO:0000255" key="1">
    <source>
        <dbReference type="HAMAP-Rule" id="MF_00236"/>
    </source>
</evidence>
<evidence type="ECO:0000256" key="2">
    <source>
        <dbReference type="SAM" id="MobiDB-lite"/>
    </source>
</evidence>
<proteinExistence type="inferred from homology"/>
<feature type="chain" id="PRO_0000336644" description="Sec-independent protein translocase protein TatA">
    <location>
        <begin position="1"/>
        <end position="77"/>
    </location>
</feature>
<feature type="transmembrane region" description="Helical" evidence="1">
    <location>
        <begin position="3"/>
        <end position="23"/>
    </location>
</feature>
<feature type="region of interest" description="Disordered" evidence="2">
    <location>
        <begin position="56"/>
        <end position="77"/>
    </location>
</feature>
<feature type="compositionally biased region" description="Basic and acidic residues" evidence="2">
    <location>
        <begin position="63"/>
        <end position="77"/>
    </location>
</feature>
<comment type="function">
    <text evidence="1">Part of the twin-arginine translocation (Tat) system that transports large folded proteins containing a characteristic twin-arginine motif in their signal peptide across membranes. TatA could form the protein-conducting channel of the Tat system.</text>
</comment>
<comment type="subunit">
    <text evidence="1">Forms a complex with TatC.</text>
</comment>
<comment type="subcellular location">
    <subcellularLocation>
        <location evidence="1">Cell inner membrane</location>
        <topology evidence="1">Single-pass membrane protein</topology>
    </subcellularLocation>
</comment>
<comment type="similarity">
    <text evidence="1">Belongs to the TatA/E family.</text>
</comment>
<accession>Q8DJ44</accession>